<comment type="function">
    <text evidence="4">Promotes progression through the cell cycle via binding and activation of CDK1.</text>
</comment>
<comment type="subunit">
    <text evidence="4">Interacts with CDK1. Does not interact with CDK2 in vivo.</text>
</comment>
<comment type="subcellular location">
    <subcellularLocation>
        <location evidence="2">Nucleus</location>
    </subcellularLocation>
</comment>
<comment type="tissue specificity">
    <text evidence="4">Testis-specific.</text>
</comment>
<comment type="similarity">
    <text evidence="5">Belongs to the Speedy/Ringo family.</text>
</comment>
<sequence>MGEGTPGVDSARVQEEGGRDQSLGFVEGRIQVGRIVTAGQLSLCSEEQSPQPGITRPSPGVVVDGESSGLAEPRVEATPQPPSSIQKRKRDESLDSEDDLAELFEPDPQPVWSVEMLCGLRMRLKRRRVSTVRPEHHKVFTKLLEDPVVKKFLTWDKMLRVSDKYLLSMVIAYFSRAGLFSWQYRPIHFFLALYLANDMEEDNQAPKQDIFYFLYGKSYAQRPMFHKLRFQFIRSMGWKIWVSREECEEIQAYNPDLWVWARDRTNLT</sequence>
<name>SPE4A_MOUSE</name>
<reference evidence="5 6" key="1">
    <citation type="journal article" date="2005" name="Cell Cycle">
        <title>Identification and comparative analysis of multiple mammalian Speedy/Ringo proteins.</title>
        <authorList>
            <person name="Cheng A."/>
            <person name="Xiong W."/>
            <person name="Ferrell J.E. Jr."/>
            <person name="Solomon M.J."/>
        </authorList>
    </citation>
    <scope>NUCLEOTIDE SEQUENCE [MRNA]</scope>
    <scope>FUNCTION</scope>
    <scope>INTERACTION WITH CDK1</scope>
    <scope>TISSUE SPECIFICITY</scope>
    <source>
        <strain evidence="6">BALB/cJ</strain>
        <tissue evidence="6">Testis</tissue>
    </source>
</reference>
<dbReference type="EMBL" id="AY820308">
    <property type="protein sequence ID" value="AAW32478.1"/>
    <property type="molecule type" value="mRNA"/>
</dbReference>
<dbReference type="CCDS" id="CCDS39368.1"/>
<dbReference type="RefSeq" id="NP_083324.3">
    <property type="nucleotide sequence ID" value="NM_029048.3"/>
</dbReference>
<dbReference type="SMR" id="Q5IBH6"/>
<dbReference type="BioGRID" id="216930">
    <property type="interactions" value="3"/>
</dbReference>
<dbReference type="FunCoup" id="Q5IBH6">
    <property type="interactions" value="125"/>
</dbReference>
<dbReference type="STRING" id="10090.ENSMUSP00000082882"/>
<dbReference type="iPTMnet" id="Q5IBH6"/>
<dbReference type="PhosphoSitePlus" id="Q5IBH6"/>
<dbReference type="PaxDb" id="10090-ENSMUSP00000082882"/>
<dbReference type="ProteomicsDB" id="257308"/>
<dbReference type="DNASU" id="74673"/>
<dbReference type="Ensembl" id="ENSMUST00000085733.9">
    <property type="protein sequence ID" value="ENSMUSP00000082882.3"/>
    <property type="gene ID" value="ENSMUSG00000039296.16"/>
</dbReference>
<dbReference type="GeneID" id="74673"/>
<dbReference type="KEGG" id="mmu:74673"/>
<dbReference type="UCSC" id="uc009ajs.1">
    <property type="organism name" value="mouse"/>
</dbReference>
<dbReference type="AGR" id="MGI:1921923"/>
<dbReference type="CTD" id="74673"/>
<dbReference type="MGI" id="MGI:1921923">
    <property type="gene designation" value="Spdye4a"/>
</dbReference>
<dbReference type="VEuPathDB" id="HostDB:ENSMUSG00000039296"/>
<dbReference type="eggNOG" id="ENOG502SSQN">
    <property type="taxonomic scope" value="Eukaryota"/>
</dbReference>
<dbReference type="GeneTree" id="ENSGT00940000154173"/>
<dbReference type="InParanoid" id="Q5IBH6"/>
<dbReference type="OrthoDB" id="9442170at2759"/>
<dbReference type="PhylomeDB" id="Q5IBH6"/>
<dbReference type="TreeFam" id="TF329827"/>
<dbReference type="BioGRID-ORCS" id="74673">
    <property type="hits" value="4 hits in 49 CRISPR screens"/>
</dbReference>
<dbReference type="PRO" id="PR:Q5IBH6"/>
<dbReference type="Proteomes" id="UP000000589">
    <property type="component" value="Chromosome 5"/>
</dbReference>
<dbReference type="RNAct" id="Q5IBH6">
    <property type="molecule type" value="protein"/>
</dbReference>
<dbReference type="Bgee" id="ENSMUSG00000039296">
    <property type="expression patterns" value="Expressed in spermatocyte and 2 other cell types or tissues"/>
</dbReference>
<dbReference type="ExpressionAtlas" id="Q5IBH6">
    <property type="expression patterns" value="baseline and differential"/>
</dbReference>
<dbReference type="GO" id="GO:0005634">
    <property type="term" value="C:nucleus"/>
    <property type="evidence" value="ECO:0000250"/>
    <property type="project" value="UniProtKB"/>
</dbReference>
<dbReference type="GO" id="GO:0019901">
    <property type="term" value="F:protein kinase binding"/>
    <property type="evidence" value="ECO:0000353"/>
    <property type="project" value="UniProtKB"/>
</dbReference>
<dbReference type="GO" id="GO:0045737">
    <property type="term" value="P:positive regulation of cyclin-dependent protein serine/threonine kinase activity"/>
    <property type="evidence" value="ECO:0000314"/>
    <property type="project" value="UniProtKB"/>
</dbReference>
<dbReference type="InterPro" id="IPR020984">
    <property type="entry name" value="Speedy"/>
</dbReference>
<dbReference type="PANTHER" id="PTHR31156">
    <property type="entry name" value="WBSCR19-LIKE PROTEIN"/>
    <property type="match status" value="1"/>
</dbReference>
<dbReference type="Pfam" id="PF11357">
    <property type="entry name" value="Spy1"/>
    <property type="match status" value="1"/>
</dbReference>
<gene>
    <name evidence="7" type="primary">Spdye4a</name>
    <name evidence="7" type="synonym">Spdyb</name>
</gene>
<proteinExistence type="evidence at protein level"/>
<organism>
    <name type="scientific">Mus musculus</name>
    <name type="common">Mouse</name>
    <dbReference type="NCBI Taxonomy" id="10090"/>
    <lineage>
        <taxon>Eukaryota</taxon>
        <taxon>Metazoa</taxon>
        <taxon>Chordata</taxon>
        <taxon>Craniata</taxon>
        <taxon>Vertebrata</taxon>
        <taxon>Euteleostomi</taxon>
        <taxon>Mammalia</taxon>
        <taxon>Eutheria</taxon>
        <taxon>Euarchontoglires</taxon>
        <taxon>Glires</taxon>
        <taxon>Rodentia</taxon>
        <taxon>Myomorpha</taxon>
        <taxon>Muroidea</taxon>
        <taxon>Muridae</taxon>
        <taxon>Murinae</taxon>
        <taxon>Mus</taxon>
        <taxon>Mus</taxon>
    </lineage>
</organism>
<evidence type="ECO:0000250" key="1">
    <source>
        <dbReference type="UniProtKB" id="Q5IBH7"/>
    </source>
</evidence>
<evidence type="ECO:0000250" key="2">
    <source>
        <dbReference type="UniProtKB" id="Q5MJ70"/>
    </source>
</evidence>
<evidence type="ECO:0000256" key="3">
    <source>
        <dbReference type="SAM" id="MobiDB-lite"/>
    </source>
</evidence>
<evidence type="ECO:0000269" key="4">
    <source>
    </source>
</evidence>
<evidence type="ECO:0000305" key="5"/>
<evidence type="ECO:0000312" key="6">
    <source>
        <dbReference type="EMBL" id="AAW32478.1"/>
    </source>
</evidence>
<evidence type="ECO:0000312" key="7">
    <source>
        <dbReference type="MGI" id="MGI:1921923"/>
    </source>
</evidence>
<keyword id="KW-0131">Cell cycle</keyword>
<keyword id="KW-0539">Nucleus</keyword>
<keyword id="KW-1185">Reference proteome</keyword>
<feature type="chain" id="PRO_0000234115" description="Speedy protein E4A">
    <location>
        <begin position="1"/>
        <end position="268"/>
    </location>
</feature>
<feature type="region of interest" description="Disordered" evidence="3">
    <location>
        <begin position="1"/>
        <end position="26"/>
    </location>
</feature>
<feature type="region of interest" description="Disordered" evidence="3">
    <location>
        <begin position="43"/>
        <end position="97"/>
    </location>
</feature>
<feature type="region of interest" description="Speedy/Ringo box; Required for CDK-binding" evidence="1">
    <location>
        <begin position="134"/>
        <end position="265"/>
    </location>
</feature>
<feature type="compositionally biased region" description="Polar residues" evidence="3">
    <location>
        <begin position="43"/>
        <end position="52"/>
    </location>
</feature>
<accession>Q5IBH6</accession>
<protein>
    <recommendedName>
        <fullName evidence="5">Speedy protein E4A</fullName>
    </recommendedName>
    <alternativeName>
        <fullName evidence="5">Rapid inducer of G2/M progression in oocytes E4A</fullName>
        <shortName evidence="5">RINGO E4A</shortName>
        <shortName evidence="5">mSpy/Ringo E4A</shortName>
    </alternativeName>
</protein>